<reference key="1">
    <citation type="submission" date="2007-06" db="EMBL/GenBank/DDBJ databases">
        <title>Complete sequence of Methanococcus aeolicus Nankai-3.</title>
        <authorList>
            <consortium name="US DOE Joint Genome Institute"/>
            <person name="Copeland A."/>
            <person name="Lucas S."/>
            <person name="Lapidus A."/>
            <person name="Barry K."/>
            <person name="Glavina del Rio T."/>
            <person name="Dalin E."/>
            <person name="Tice H."/>
            <person name="Pitluck S."/>
            <person name="Chain P."/>
            <person name="Malfatti S."/>
            <person name="Shin M."/>
            <person name="Vergez L."/>
            <person name="Schmutz J."/>
            <person name="Larimer F."/>
            <person name="Land M."/>
            <person name="Hauser L."/>
            <person name="Kyrpides N."/>
            <person name="Lykidis A."/>
            <person name="Sieprawska-Lupa M."/>
            <person name="Whitman W.B."/>
            <person name="Richardson P."/>
        </authorList>
    </citation>
    <scope>NUCLEOTIDE SEQUENCE [LARGE SCALE GENOMIC DNA]</scope>
    <source>
        <strain>ATCC BAA-1280 / DSM 17508 / OCM 812 / Nankai-3</strain>
    </source>
</reference>
<name>RS19_META3</name>
<evidence type="ECO:0000255" key="1">
    <source>
        <dbReference type="HAMAP-Rule" id="MF_00531"/>
    </source>
</evidence>
<evidence type="ECO:0000256" key="2">
    <source>
        <dbReference type="SAM" id="MobiDB-lite"/>
    </source>
</evidence>
<evidence type="ECO:0000305" key="3"/>
<accession>A6UV64</accession>
<dbReference type="EMBL" id="CP000743">
    <property type="protein sequence ID" value="ABR56386.1"/>
    <property type="molecule type" value="Genomic_DNA"/>
</dbReference>
<dbReference type="RefSeq" id="WP_011973518.1">
    <property type="nucleotide sequence ID" value="NC_009635.1"/>
</dbReference>
<dbReference type="SMR" id="A6UV64"/>
<dbReference type="STRING" id="419665.Maeo_0803"/>
<dbReference type="GeneID" id="5326338"/>
<dbReference type="KEGG" id="mae:Maeo_0803"/>
<dbReference type="eggNOG" id="arCOG04099">
    <property type="taxonomic scope" value="Archaea"/>
</dbReference>
<dbReference type="HOGENOM" id="CLU_097347_1_1_2"/>
<dbReference type="OrthoDB" id="30559at2157"/>
<dbReference type="Proteomes" id="UP000001106">
    <property type="component" value="Chromosome"/>
</dbReference>
<dbReference type="GO" id="GO:0022627">
    <property type="term" value="C:cytosolic small ribosomal subunit"/>
    <property type="evidence" value="ECO:0007669"/>
    <property type="project" value="TreeGrafter"/>
</dbReference>
<dbReference type="GO" id="GO:0019843">
    <property type="term" value="F:rRNA binding"/>
    <property type="evidence" value="ECO:0007669"/>
    <property type="project" value="UniProtKB-UniRule"/>
</dbReference>
<dbReference type="GO" id="GO:0003735">
    <property type="term" value="F:structural constituent of ribosome"/>
    <property type="evidence" value="ECO:0007669"/>
    <property type="project" value="InterPro"/>
</dbReference>
<dbReference type="GO" id="GO:0000028">
    <property type="term" value="P:ribosomal small subunit assembly"/>
    <property type="evidence" value="ECO:0007669"/>
    <property type="project" value="TreeGrafter"/>
</dbReference>
<dbReference type="GO" id="GO:0006412">
    <property type="term" value="P:translation"/>
    <property type="evidence" value="ECO:0007669"/>
    <property type="project" value="UniProtKB-UniRule"/>
</dbReference>
<dbReference type="FunFam" id="3.30.860.10:FF:000002">
    <property type="entry name" value="40S ribosomal protein S15"/>
    <property type="match status" value="1"/>
</dbReference>
<dbReference type="Gene3D" id="3.30.860.10">
    <property type="entry name" value="30s Ribosomal Protein S19, Chain A"/>
    <property type="match status" value="1"/>
</dbReference>
<dbReference type="HAMAP" id="MF_00531">
    <property type="entry name" value="Ribosomal_uS19"/>
    <property type="match status" value="1"/>
</dbReference>
<dbReference type="InterPro" id="IPR002222">
    <property type="entry name" value="Ribosomal_uS19"/>
</dbReference>
<dbReference type="InterPro" id="IPR020934">
    <property type="entry name" value="Ribosomal_uS19_CS"/>
</dbReference>
<dbReference type="InterPro" id="IPR005713">
    <property type="entry name" value="Ribosomal_uS19_euk/arc"/>
</dbReference>
<dbReference type="InterPro" id="IPR023575">
    <property type="entry name" value="Ribosomal_uS19_SF"/>
</dbReference>
<dbReference type="NCBIfam" id="NF003121">
    <property type="entry name" value="PRK04038.1"/>
    <property type="match status" value="1"/>
</dbReference>
<dbReference type="NCBIfam" id="TIGR01025">
    <property type="entry name" value="uS19_arch"/>
    <property type="match status" value="1"/>
</dbReference>
<dbReference type="PANTHER" id="PTHR11880">
    <property type="entry name" value="RIBOSOMAL PROTEIN S19P FAMILY MEMBER"/>
    <property type="match status" value="1"/>
</dbReference>
<dbReference type="PANTHER" id="PTHR11880:SF2">
    <property type="entry name" value="SMALL RIBOSOMAL SUBUNIT PROTEIN US19"/>
    <property type="match status" value="1"/>
</dbReference>
<dbReference type="Pfam" id="PF00203">
    <property type="entry name" value="Ribosomal_S19"/>
    <property type="match status" value="1"/>
</dbReference>
<dbReference type="PIRSF" id="PIRSF002144">
    <property type="entry name" value="Ribosomal_S19"/>
    <property type="match status" value="1"/>
</dbReference>
<dbReference type="PRINTS" id="PR00975">
    <property type="entry name" value="RIBOSOMALS19"/>
</dbReference>
<dbReference type="SUPFAM" id="SSF54570">
    <property type="entry name" value="Ribosomal protein S19"/>
    <property type="match status" value="1"/>
</dbReference>
<dbReference type="PROSITE" id="PS00323">
    <property type="entry name" value="RIBOSOMAL_S19"/>
    <property type="match status" value="1"/>
</dbReference>
<comment type="function">
    <text evidence="1">Protein S19 forms a complex with S13 that binds strongly to the 16S ribosomal RNA.</text>
</comment>
<comment type="similarity">
    <text evidence="1">Belongs to the universal ribosomal protein uS19 family.</text>
</comment>
<feature type="chain" id="PRO_0000354313" description="Small ribosomal subunit protein uS19">
    <location>
        <begin position="1"/>
        <end position="162"/>
    </location>
</feature>
<feature type="region of interest" description="Disordered" evidence="2">
    <location>
        <begin position="1"/>
        <end position="29"/>
    </location>
</feature>
<feature type="compositionally biased region" description="Basic residues" evidence="2">
    <location>
        <begin position="1"/>
        <end position="27"/>
    </location>
</feature>
<gene>
    <name evidence="1" type="primary">rps19</name>
    <name type="ordered locus">Maeo_0803</name>
</gene>
<proteinExistence type="inferred from homology"/>
<keyword id="KW-0687">Ribonucleoprotein</keyword>
<keyword id="KW-0689">Ribosomal protein</keyword>
<keyword id="KW-0694">RNA-binding</keyword>
<keyword id="KW-0699">rRNA-binding</keyword>
<sequence length="162" mass="18616">MAKQKKFSGKGSARSKRKQNRKQVGPRRRVEFKYKGFTLGELQEMPIKKFMEIVPARQRRSMKKGITPKQRKLVMKIKKARRLANRGKDPRTIRTHCRDFVITPEMIGLPFGIYNGKEFIEVKLVEEAIGRFLGEFAPSRKVVQHGSPGMGATRGSMFVPIK</sequence>
<protein>
    <recommendedName>
        <fullName evidence="1">Small ribosomal subunit protein uS19</fullName>
    </recommendedName>
    <alternativeName>
        <fullName evidence="3">30S ribosomal protein S19</fullName>
    </alternativeName>
</protein>
<organism>
    <name type="scientific">Methanococcus aeolicus (strain ATCC BAA-1280 / DSM 17508 / OCM 812 / Nankai-3)</name>
    <dbReference type="NCBI Taxonomy" id="419665"/>
    <lineage>
        <taxon>Archaea</taxon>
        <taxon>Methanobacteriati</taxon>
        <taxon>Methanobacteriota</taxon>
        <taxon>Methanomada group</taxon>
        <taxon>Methanococci</taxon>
        <taxon>Methanococcales</taxon>
        <taxon>Methanococcaceae</taxon>
        <taxon>Methanococcus</taxon>
    </lineage>
</organism>